<comment type="function">
    <text evidence="1">Catalyzes the condensation reaction of fatty acid synthesis by the addition to an acyl acceptor of two carbons from malonyl-ACP. Catalyzes the first condensation reaction which initiates fatty acid synthesis and may therefore play a role in governing the total rate of fatty acid production. Possesses both acetoacetyl-ACP synthase and acetyl transacylase activities. Its substrate specificity determines the biosynthesis of branched-chain and/or straight-chain of fatty acids.</text>
</comment>
<comment type="catalytic activity">
    <reaction evidence="1">
        <text>malonyl-[ACP] + acetyl-CoA + H(+) = 3-oxobutanoyl-[ACP] + CO2 + CoA</text>
        <dbReference type="Rhea" id="RHEA:12080"/>
        <dbReference type="Rhea" id="RHEA-COMP:9623"/>
        <dbReference type="Rhea" id="RHEA-COMP:9625"/>
        <dbReference type="ChEBI" id="CHEBI:15378"/>
        <dbReference type="ChEBI" id="CHEBI:16526"/>
        <dbReference type="ChEBI" id="CHEBI:57287"/>
        <dbReference type="ChEBI" id="CHEBI:57288"/>
        <dbReference type="ChEBI" id="CHEBI:78449"/>
        <dbReference type="ChEBI" id="CHEBI:78450"/>
        <dbReference type="EC" id="2.3.1.180"/>
    </reaction>
</comment>
<comment type="pathway">
    <text evidence="1">Lipid metabolism; fatty acid biosynthesis.</text>
</comment>
<comment type="subunit">
    <text evidence="1">Homodimer.</text>
</comment>
<comment type="subcellular location">
    <subcellularLocation>
        <location evidence="1">Cytoplasm</location>
    </subcellularLocation>
</comment>
<comment type="domain">
    <text evidence="1">The last Arg residue of the ACP-binding site is essential for the weak association between ACP/AcpP and FabH.</text>
</comment>
<comment type="similarity">
    <text evidence="1">Belongs to the thiolase-like superfamily. FabH family.</text>
</comment>
<name>FABH_ECOL5</name>
<keyword id="KW-0012">Acyltransferase</keyword>
<keyword id="KW-0963">Cytoplasm</keyword>
<keyword id="KW-0275">Fatty acid biosynthesis</keyword>
<keyword id="KW-0276">Fatty acid metabolism</keyword>
<keyword id="KW-0444">Lipid biosynthesis</keyword>
<keyword id="KW-0443">Lipid metabolism</keyword>
<keyword id="KW-0511">Multifunctional enzyme</keyword>
<keyword id="KW-0808">Transferase</keyword>
<evidence type="ECO:0000255" key="1">
    <source>
        <dbReference type="HAMAP-Rule" id="MF_01815"/>
    </source>
</evidence>
<gene>
    <name evidence="1" type="primary">fabH</name>
    <name type="ordered locus">ECP_1083</name>
</gene>
<dbReference type="EC" id="2.3.1.180" evidence="1"/>
<dbReference type="EMBL" id="CP000247">
    <property type="protein sequence ID" value="ABG69096.1"/>
    <property type="molecule type" value="Genomic_DNA"/>
</dbReference>
<dbReference type="RefSeq" id="WP_000288132.1">
    <property type="nucleotide sequence ID" value="NC_008253.1"/>
</dbReference>
<dbReference type="SMR" id="Q0TIY3"/>
<dbReference type="GeneID" id="93776317"/>
<dbReference type="KEGG" id="ecp:ECP_1083"/>
<dbReference type="HOGENOM" id="CLU_039592_4_1_6"/>
<dbReference type="UniPathway" id="UPA00094"/>
<dbReference type="Proteomes" id="UP000009182">
    <property type="component" value="Chromosome"/>
</dbReference>
<dbReference type="GO" id="GO:0005737">
    <property type="term" value="C:cytoplasm"/>
    <property type="evidence" value="ECO:0007669"/>
    <property type="project" value="UniProtKB-SubCell"/>
</dbReference>
<dbReference type="GO" id="GO:0004315">
    <property type="term" value="F:3-oxoacyl-[acyl-carrier-protein] synthase activity"/>
    <property type="evidence" value="ECO:0007669"/>
    <property type="project" value="InterPro"/>
</dbReference>
<dbReference type="GO" id="GO:0033818">
    <property type="term" value="F:beta-ketoacyl-acyl-carrier-protein synthase III activity"/>
    <property type="evidence" value="ECO:0007669"/>
    <property type="project" value="UniProtKB-UniRule"/>
</dbReference>
<dbReference type="GO" id="GO:0006633">
    <property type="term" value="P:fatty acid biosynthetic process"/>
    <property type="evidence" value="ECO:0007669"/>
    <property type="project" value="UniProtKB-UniRule"/>
</dbReference>
<dbReference type="CDD" id="cd00830">
    <property type="entry name" value="KAS_III"/>
    <property type="match status" value="1"/>
</dbReference>
<dbReference type="FunFam" id="3.40.47.10:FF:000004">
    <property type="entry name" value="3-oxoacyl-[acyl-carrier-protein] synthase 3"/>
    <property type="match status" value="1"/>
</dbReference>
<dbReference type="Gene3D" id="3.40.47.10">
    <property type="match status" value="1"/>
</dbReference>
<dbReference type="HAMAP" id="MF_01815">
    <property type="entry name" value="FabH"/>
    <property type="match status" value="1"/>
</dbReference>
<dbReference type="InterPro" id="IPR013747">
    <property type="entry name" value="ACP_syn_III_C"/>
</dbReference>
<dbReference type="InterPro" id="IPR013751">
    <property type="entry name" value="ACP_syn_III_N"/>
</dbReference>
<dbReference type="InterPro" id="IPR004655">
    <property type="entry name" value="FabH"/>
</dbReference>
<dbReference type="InterPro" id="IPR016039">
    <property type="entry name" value="Thiolase-like"/>
</dbReference>
<dbReference type="NCBIfam" id="TIGR00747">
    <property type="entry name" value="fabH"/>
    <property type="match status" value="1"/>
</dbReference>
<dbReference type="NCBIfam" id="NF006829">
    <property type="entry name" value="PRK09352.1"/>
    <property type="match status" value="1"/>
</dbReference>
<dbReference type="PANTHER" id="PTHR43091">
    <property type="entry name" value="3-OXOACYL-[ACYL-CARRIER-PROTEIN] SYNTHASE"/>
    <property type="match status" value="1"/>
</dbReference>
<dbReference type="PANTHER" id="PTHR43091:SF1">
    <property type="entry name" value="BETA-KETOACYL-[ACYL-CARRIER-PROTEIN] SYNTHASE III, CHLOROPLASTIC"/>
    <property type="match status" value="1"/>
</dbReference>
<dbReference type="Pfam" id="PF08545">
    <property type="entry name" value="ACP_syn_III"/>
    <property type="match status" value="1"/>
</dbReference>
<dbReference type="Pfam" id="PF08541">
    <property type="entry name" value="ACP_syn_III_C"/>
    <property type="match status" value="1"/>
</dbReference>
<dbReference type="SUPFAM" id="SSF53901">
    <property type="entry name" value="Thiolase-like"/>
    <property type="match status" value="1"/>
</dbReference>
<protein>
    <recommendedName>
        <fullName evidence="1">Beta-ketoacyl-[acyl-carrier-protein] synthase III</fullName>
        <shortName evidence="1">Beta-ketoacyl-ACP synthase III</shortName>
        <shortName evidence="1">KAS III</shortName>
        <ecNumber evidence="1">2.3.1.180</ecNumber>
    </recommendedName>
    <alternativeName>
        <fullName evidence="1">3-oxoacyl-[acyl-carrier-protein] synthase 3</fullName>
    </alternativeName>
    <alternativeName>
        <fullName evidence="1">3-oxoacyl-[acyl-carrier-protein] synthase III</fullName>
    </alternativeName>
</protein>
<feature type="chain" id="PRO_1000056355" description="Beta-ketoacyl-[acyl-carrier-protein] synthase III">
    <location>
        <begin position="1"/>
        <end position="317"/>
    </location>
</feature>
<feature type="region of interest" description="ACP-binding" evidence="1">
    <location>
        <begin position="245"/>
        <end position="249"/>
    </location>
</feature>
<feature type="active site" evidence="1">
    <location>
        <position position="112"/>
    </location>
</feature>
<feature type="active site" evidence="1">
    <location>
        <position position="244"/>
    </location>
</feature>
<feature type="active site" evidence="1">
    <location>
        <position position="274"/>
    </location>
</feature>
<sequence length="317" mass="33515">MYTKIIGTGSYLPEQVRTNADLEKMVDTSDEWIVTRTGIRERHIAAPNETVSTMGFEAATRAIEMAGIEKDQIGLIVVATTSATHAFPSAACQIQSMLGIKGCPAFDVAAACAGFTYALSVADQYVKSGAVKYALVVGSDVLARTCDPTDRGTIIIFGDGAGAAVLAASEEPGIISTHLHADGSYGELLTLPNADRVNPENSIHLTMAGNEVFKVAVTELAHIVDETLAANNLDRSQLDWLVPHQANLRIISATAKKLGMSMDNVVVTLDRHGNTSAASVPCALDEAVRDGRIKPGQLVLLEAFGGGFTWGSALVRF</sequence>
<organism>
    <name type="scientific">Escherichia coli O6:K15:H31 (strain 536 / UPEC)</name>
    <dbReference type="NCBI Taxonomy" id="362663"/>
    <lineage>
        <taxon>Bacteria</taxon>
        <taxon>Pseudomonadati</taxon>
        <taxon>Pseudomonadota</taxon>
        <taxon>Gammaproteobacteria</taxon>
        <taxon>Enterobacterales</taxon>
        <taxon>Enterobacteriaceae</taxon>
        <taxon>Escherichia</taxon>
    </lineage>
</organism>
<reference key="1">
    <citation type="journal article" date="2006" name="Mol. Microbiol.">
        <title>Role of pathogenicity island-associated integrases in the genome plasticity of uropathogenic Escherichia coli strain 536.</title>
        <authorList>
            <person name="Hochhut B."/>
            <person name="Wilde C."/>
            <person name="Balling G."/>
            <person name="Middendorf B."/>
            <person name="Dobrindt U."/>
            <person name="Brzuszkiewicz E."/>
            <person name="Gottschalk G."/>
            <person name="Carniel E."/>
            <person name="Hacker J."/>
        </authorList>
    </citation>
    <scope>NUCLEOTIDE SEQUENCE [LARGE SCALE GENOMIC DNA]</scope>
    <source>
        <strain>536 / UPEC</strain>
    </source>
</reference>
<proteinExistence type="inferred from homology"/>
<accession>Q0TIY3</accession>